<organism>
    <name type="scientific">Mus musculus</name>
    <name type="common">Mouse</name>
    <dbReference type="NCBI Taxonomy" id="10090"/>
    <lineage>
        <taxon>Eukaryota</taxon>
        <taxon>Metazoa</taxon>
        <taxon>Chordata</taxon>
        <taxon>Craniata</taxon>
        <taxon>Vertebrata</taxon>
        <taxon>Euteleostomi</taxon>
        <taxon>Mammalia</taxon>
        <taxon>Eutheria</taxon>
        <taxon>Euarchontoglires</taxon>
        <taxon>Glires</taxon>
        <taxon>Rodentia</taxon>
        <taxon>Myomorpha</taxon>
        <taxon>Muroidea</taxon>
        <taxon>Muridae</taxon>
        <taxon>Murinae</taxon>
        <taxon>Mus</taxon>
        <taxon>Mus</taxon>
    </lineage>
</organism>
<accession>P70396</accession>
<accession>O54876</accession>
<accession>O54877</accession>
<accession>O54878</accession>
<accession>Q9JJ45</accession>
<comment type="function">
    <text evidence="4 5 7">Transcriptional factor involved in bone development. Acts as an immediate early BMP-responsive transcriptional activator essential for osteoblast differentiation. Stimulates ALPL promoter activity in a RUNX2-independent manner during osteoblast differentiation. Stimulates SP7 promoter activity during osteoblast differentiation. Promotes cell proliferation by up-regulating MYC promoter activity. Involved as a positive regulator of both chondrogenesis and chondrocyte hypertrophy in the endochondral skeleton. Binds to the homeodomain-response element of the ALPL and SP7 promoter. Binds to the MYC promoter. Requires the 5'-TAATTA-3' consensus sequence for DNA-binding.</text>
</comment>
<comment type="subunit">
    <text evidence="1">Interacts with XRCC6 (Ku70).</text>
</comment>
<comment type="interaction">
    <interactant intactId="EBI-1801294">
        <id>P70396</id>
    </interactant>
    <interactant intactId="EBI-1801274">
        <id>Q9QYH6</id>
        <label>Maged1</label>
    </interactant>
    <organismsDiffer>false</organismsDiffer>
    <experiments>2</experiments>
</comment>
<comment type="subcellular location">
    <subcellularLocation>
        <location evidence="2 5">Nucleus</location>
    </subcellularLocation>
</comment>
<comment type="alternative products">
    <event type="alternative splicing"/>
    <isoform>
        <id>P70396-1</id>
        <name>1</name>
        <name>Alpha</name>
        <sequence type="displayed"/>
    </isoform>
    <isoform>
        <id>P70396-2</id>
        <name>2</name>
        <name>Beta</name>
        <sequence type="described" ref="VSP_002239"/>
    </isoform>
    <isoform>
        <id>P70396-3</id>
        <name>3</name>
        <name>Gamma</name>
        <sequence type="described" ref="VSP_002237 VSP_002238"/>
    </isoform>
</comment>
<comment type="tissue specificity">
    <text evidence="7">Expressed in osteoblasts and chondrocytes.</text>
</comment>
<comment type="developmental stage">
    <text evidence="7">Expressed in the otic vesicle, mandibular arch, branchial arches 2 and 3, in proximal anterior mesodermal domain in the limb, immature and proliferating chondroblasts at 14.5 dpc.</text>
</comment>
<comment type="induction">
    <text evidence="4 5">Up-regulated by BMP2.</text>
</comment>
<comment type="PTM">
    <text evidence="5 6">Phosphorylated. Phosphorylation of Ser-34 and Ser-217 by MAPK14 enhances its transcriptional activity. Phosphorylation by CaMK2 increases its protein stability.</text>
</comment>
<comment type="similarity">
    <text evidence="10">Belongs to the distal-less homeobox family.</text>
</comment>
<protein>
    <recommendedName>
        <fullName>Homeobox protein DLX-5</fullName>
    </recommendedName>
</protein>
<feature type="chain" id="PRO_0000049032" description="Homeobox protein DLX-5">
    <location>
        <begin position="1"/>
        <end position="289"/>
    </location>
</feature>
<feature type="DNA-binding region" description="Homeobox" evidence="2">
    <location>
        <begin position="137"/>
        <end position="196"/>
    </location>
</feature>
<feature type="region of interest" description="Disordered" evidence="3">
    <location>
        <begin position="1"/>
        <end position="49"/>
    </location>
</feature>
<feature type="region of interest" description="Disordered" evidence="3">
    <location>
        <begin position="198"/>
        <end position="253"/>
    </location>
</feature>
<feature type="region of interest" description="Disordered" evidence="3">
    <location>
        <begin position="270"/>
        <end position="289"/>
    </location>
</feature>
<feature type="compositionally biased region" description="Polar residues" evidence="3">
    <location>
        <begin position="32"/>
        <end position="46"/>
    </location>
</feature>
<feature type="compositionally biased region" description="Polar residues" evidence="3">
    <location>
        <begin position="206"/>
        <end position="220"/>
    </location>
</feature>
<feature type="compositionally biased region" description="Polar residues" evidence="3">
    <location>
        <begin position="242"/>
        <end position="253"/>
    </location>
</feature>
<feature type="modified residue" description="Phosphoserine; by MAPK14; in vitro" evidence="5">
    <location>
        <position position="34"/>
    </location>
</feature>
<feature type="modified residue" description="Phosphoserine; by MAPK14; in vitro" evidence="5">
    <location>
        <position position="217"/>
    </location>
</feature>
<feature type="splice variant" id="VSP_002237" description="In isoform 3." evidence="8 9">
    <original>EKEVAEPEVRMVNGKPKKVRKPRTIYSS</original>
    <variation>AFSWPLYREGFRRLSTSPCQNARSWPPL</variation>
    <location>
        <begin position="119"/>
        <end position="146"/>
    </location>
</feature>
<feature type="splice variant" id="VSP_002238" description="In isoform 3." evidence="8 9">
    <location>
        <begin position="147"/>
        <end position="289"/>
    </location>
</feature>
<feature type="splice variant" id="VSP_002239" description="In isoform 2." evidence="8">
    <location>
        <begin position="147"/>
        <end position="251"/>
    </location>
</feature>
<feature type="mutagenesis site" description="Inhibits its transcriptional activity; when associated with A-217." evidence="5">
    <original>S</original>
    <variation>A</variation>
    <location>
        <position position="34"/>
    </location>
</feature>
<feature type="mutagenesis site" description="Inhibits its transcriptional activity; when associated with A-34." evidence="5">
    <original>S</original>
    <variation>A</variation>
    <location>
        <position position="217"/>
    </location>
</feature>
<feature type="sequence conflict" description="In Ref. 3; AAB94580/AAB94581." evidence="10" ref="3">
    <original>AS</original>
    <variation>H</variation>
    <location>
        <begin position="98"/>
        <end position="99"/>
    </location>
</feature>
<dbReference type="EMBL" id="U67840">
    <property type="protein sequence ID" value="AAC52843.1"/>
    <property type="molecule type" value="mRNA"/>
</dbReference>
<dbReference type="EMBL" id="AF033011">
    <property type="protein sequence ID" value="AAB86899.1"/>
    <property type="molecule type" value="mRNA"/>
</dbReference>
<dbReference type="EMBL" id="AF022075">
    <property type="protein sequence ID" value="AAB94580.1"/>
    <property type="molecule type" value="mRNA"/>
</dbReference>
<dbReference type="EMBL" id="AF022076">
    <property type="protein sequence ID" value="AAB94581.1"/>
    <property type="molecule type" value="mRNA"/>
</dbReference>
<dbReference type="EMBL" id="AF022077">
    <property type="protein sequence ID" value="AAB94582.1"/>
    <property type="molecule type" value="mRNA"/>
</dbReference>
<dbReference type="EMBL" id="AF072452">
    <property type="protein sequence ID" value="AAF86636.1"/>
    <property type="molecule type" value="mRNA"/>
</dbReference>
<dbReference type="EMBL" id="AF072453">
    <property type="protein sequence ID" value="AAF86637.1"/>
    <property type="molecule type" value="mRNA"/>
</dbReference>
<dbReference type="CCDS" id="CCDS19905.1">
    <molecule id="P70396-1"/>
</dbReference>
<dbReference type="CCDS" id="CCDS59691.1">
    <molecule id="P70396-3"/>
</dbReference>
<dbReference type="RefSeq" id="NP_034186.2">
    <molecule id="P70396-1"/>
    <property type="nucleotide sequence ID" value="NM_010056.3"/>
</dbReference>
<dbReference type="RefSeq" id="NP_942151.1">
    <molecule id="P70396-3"/>
    <property type="nucleotide sequence ID" value="NM_198854.2"/>
</dbReference>
<dbReference type="BMRB" id="P70396"/>
<dbReference type="SMR" id="P70396"/>
<dbReference type="BioGRID" id="199238">
    <property type="interactions" value="10"/>
</dbReference>
<dbReference type="FunCoup" id="P70396">
    <property type="interactions" value="1166"/>
</dbReference>
<dbReference type="IntAct" id="P70396">
    <property type="interactions" value="8"/>
</dbReference>
<dbReference type="STRING" id="10090.ENSMUSP00000052559"/>
<dbReference type="GlyGen" id="P70396">
    <property type="glycosylation" value="1 site"/>
</dbReference>
<dbReference type="iPTMnet" id="P70396"/>
<dbReference type="PhosphoSitePlus" id="P70396"/>
<dbReference type="PaxDb" id="10090-ENSMUSP00000052559"/>
<dbReference type="ProteomicsDB" id="279543">
    <molecule id="P70396-1"/>
</dbReference>
<dbReference type="ProteomicsDB" id="279544">
    <molecule id="P70396-2"/>
</dbReference>
<dbReference type="ProteomicsDB" id="279545">
    <molecule id="P70396-3"/>
</dbReference>
<dbReference type="Antibodypedia" id="1428">
    <property type="antibodies" value="501 antibodies from 39 providers"/>
</dbReference>
<dbReference type="DNASU" id="13395"/>
<dbReference type="Ensembl" id="ENSMUST00000052609.9">
    <molecule id="P70396-1"/>
    <property type="protein sequence ID" value="ENSMUSP00000052559.9"/>
    <property type="gene ID" value="ENSMUSG00000029755.11"/>
</dbReference>
<dbReference type="Ensembl" id="ENSMUST00000142635.2">
    <molecule id="P70396-3"/>
    <property type="protein sequence ID" value="ENSMUSP00000138264.2"/>
    <property type="gene ID" value="ENSMUSG00000029755.11"/>
</dbReference>
<dbReference type="GeneID" id="13395"/>
<dbReference type="KEGG" id="mmu:13395"/>
<dbReference type="UCSC" id="uc009awy.2">
    <molecule id="P70396-3"/>
    <property type="organism name" value="mouse"/>
</dbReference>
<dbReference type="UCSC" id="uc009awz.2">
    <molecule id="P70396-1"/>
    <property type="organism name" value="mouse"/>
</dbReference>
<dbReference type="AGR" id="MGI:101926"/>
<dbReference type="CTD" id="1749"/>
<dbReference type="MGI" id="MGI:101926">
    <property type="gene designation" value="Dlx5"/>
</dbReference>
<dbReference type="VEuPathDB" id="HostDB:ENSMUSG00000029755"/>
<dbReference type="eggNOG" id="KOG0850">
    <property type="taxonomic scope" value="Eukaryota"/>
</dbReference>
<dbReference type="GeneTree" id="ENSGT00940000159188"/>
<dbReference type="HOGENOM" id="CLU_2090288_0_0_1"/>
<dbReference type="InParanoid" id="P70396"/>
<dbReference type="OMA" id="GVSHGYC"/>
<dbReference type="OrthoDB" id="6159439at2759"/>
<dbReference type="PhylomeDB" id="P70396"/>
<dbReference type="TreeFam" id="TF350606"/>
<dbReference type="BioGRID-ORCS" id="13395">
    <property type="hits" value="2 hits in 80 CRISPR screens"/>
</dbReference>
<dbReference type="PRO" id="PR:P70396"/>
<dbReference type="Proteomes" id="UP000000589">
    <property type="component" value="Chromosome 6"/>
</dbReference>
<dbReference type="RNAct" id="P70396">
    <property type="molecule type" value="protein"/>
</dbReference>
<dbReference type="Bgee" id="ENSMUSG00000029755">
    <property type="expression patterns" value="Expressed in neural plate and 179 other cell types or tissues"/>
</dbReference>
<dbReference type="ExpressionAtlas" id="P70396">
    <property type="expression patterns" value="baseline and differential"/>
</dbReference>
<dbReference type="GO" id="GO:0000785">
    <property type="term" value="C:chromatin"/>
    <property type="evidence" value="ECO:0000314"/>
    <property type="project" value="BHF-UCL"/>
</dbReference>
<dbReference type="GO" id="GO:0005737">
    <property type="term" value="C:cytoplasm"/>
    <property type="evidence" value="ECO:0000314"/>
    <property type="project" value="MGI"/>
</dbReference>
<dbReference type="GO" id="GO:0005654">
    <property type="term" value="C:nucleoplasm"/>
    <property type="evidence" value="ECO:0000304"/>
    <property type="project" value="Reactome"/>
</dbReference>
<dbReference type="GO" id="GO:0005634">
    <property type="term" value="C:nucleus"/>
    <property type="evidence" value="ECO:0000314"/>
    <property type="project" value="MGI"/>
</dbReference>
<dbReference type="GO" id="GO:0003677">
    <property type="term" value="F:DNA binding"/>
    <property type="evidence" value="ECO:0000314"/>
    <property type="project" value="MGI"/>
</dbReference>
<dbReference type="GO" id="GO:0001228">
    <property type="term" value="F:DNA-binding transcription activator activity, RNA polymerase II-specific"/>
    <property type="evidence" value="ECO:0000314"/>
    <property type="project" value="BHF-UCL"/>
</dbReference>
<dbReference type="GO" id="GO:0071837">
    <property type="term" value="F:HMG box domain binding"/>
    <property type="evidence" value="ECO:0000353"/>
    <property type="project" value="UniProtKB"/>
</dbReference>
<dbReference type="GO" id="GO:0000978">
    <property type="term" value="F:RNA polymerase II cis-regulatory region sequence-specific DNA binding"/>
    <property type="evidence" value="ECO:0000314"/>
    <property type="project" value="BHF-UCL"/>
</dbReference>
<dbReference type="GO" id="GO:0000976">
    <property type="term" value="F:transcription cis-regulatory region binding"/>
    <property type="evidence" value="ECO:0000314"/>
    <property type="project" value="UniProtKB"/>
</dbReference>
<dbReference type="GO" id="GO:0048646">
    <property type="term" value="P:anatomical structure formation involved in morphogenesis"/>
    <property type="evidence" value="ECO:0000316"/>
    <property type="project" value="MGI"/>
</dbReference>
<dbReference type="GO" id="GO:0007411">
    <property type="term" value="P:axon guidance"/>
    <property type="evidence" value="ECO:0000315"/>
    <property type="project" value="MGI"/>
</dbReference>
<dbReference type="GO" id="GO:0007409">
    <property type="term" value="P:axonogenesis"/>
    <property type="evidence" value="ECO:0000315"/>
    <property type="project" value="MGI"/>
</dbReference>
<dbReference type="GO" id="GO:0030509">
    <property type="term" value="P:BMP signaling pathway"/>
    <property type="evidence" value="ECO:0000315"/>
    <property type="project" value="BHF-UCL"/>
</dbReference>
<dbReference type="GO" id="GO:0060349">
    <property type="term" value="P:bone morphogenesis"/>
    <property type="evidence" value="ECO:0000315"/>
    <property type="project" value="MGI"/>
</dbReference>
<dbReference type="GO" id="GO:0008283">
    <property type="term" value="P:cell population proliferation"/>
    <property type="evidence" value="ECO:0000250"/>
    <property type="project" value="UniProtKB"/>
</dbReference>
<dbReference type="GO" id="GO:0043583">
    <property type="term" value="P:ear development"/>
    <property type="evidence" value="ECO:0000315"/>
    <property type="project" value="MGI"/>
</dbReference>
<dbReference type="GO" id="GO:0030326">
    <property type="term" value="P:embryonic limb morphogenesis"/>
    <property type="evidence" value="ECO:0000316"/>
    <property type="project" value="MGI"/>
</dbReference>
<dbReference type="GO" id="GO:0001958">
    <property type="term" value="P:endochondral ossification"/>
    <property type="evidence" value="ECO:0000315"/>
    <property type="project" value="UniProtKB"/>
</dbReference>
<dbReference type="GO" id="GO:0030855">
    <property type="term" value="P:epithelial cell differentiation"/>
    <property type="evidence" value="ECO:0000316"/>
    <property type="project" value="MGI"/>
</dbReference>
<dbReference type="GO" id="GO:0060325">
    <property type="term" value="P:face morphogenesis"/>
    <property type="evidence" value="ECO:0000315"/>
    <property type="project" value="MGI"/>
</dbReference>
<dbReference type="GO" id="GO:0060322">
    <property type="term" value="P:head development"/>
    <property type="evidence" value="ECO:0000316"/>
    <property type="project" value="MGI"/>
</dbReference>
<dbReference type="GO" id="GO:0042472">
    <property type="term" value="P:inner ear morphogenesis"/>
    <property type="evidence" value="ECO:0000315"/>
    <property type="project" value="MGI"/>
</dbReference>
<dbReference type="GO" id="GO:0097376">
    <property type="term" value="P:interneuron axon guidance"/>
    <property type="evidence" value="ECO:0000315"/>
    <property type="project" value="MGI"/>
</dbReference>
<dbReference type="GO" id="GO:0021889">
    <property type="term" value="P:olfactory bulb interneuron differentiation"/>
    <property type="evidence" value="ECO:0000315"/>
    <property type="project" value="MGI"/>
</dbReference>
<dbReference type="GO" id="GO:0060166">
    <property type="term" value="P:olfactory pit development"/>
    <property type="evidence" value="ECO:0000315"/>
    <property type="project" value="MGI"/>
</dbReference>
<dbReference type="GO" id="GO:0001649">
    <property type="term" value="P:osteoblast differentiation"/>
    <property type="evidence" value="ECO:0000314"/>
    <property type="project" value="UniProtKB"/>
</dbReference>
<dbReference type="GO" id="GO:0090263">
    <property type="term" value="P:positive regulation of canonical Wnt signaling pathway"/>
    <property type="evidence" value="ECO:0000315"/>
    <property type="project" value="MGI"/>
</dbReference>
<dbReference type="GO" id="GO:0045893">
    <property type="term" value="P:positive regulation of DNA-templated transcription"/>
    <property type="evidence" value="ECO:0000314"/>
    <property type="project" value="UniProtKB"/>
</dbReference>
<dbReference type="GO" id="GO:0050679">
    <property type="term" value="P:positive regulation of epithelial cell proliferation"/>
    <property type="evidence" value="ECO:0000316"/>
    <property type="project" value="MGI"/>
</dbReference>
<dbReference type="GO" id="GO:0010628">
    <property type="term" value="P:positive regulation of gene expression"/>
    <property type="evidence" value="ECO:0000315"/>
    <property type="project" value="MGI"/>
</dbReference>
<dbReference type="GO" id="GO:0045944">
    <property type="term" value="P:positive regulation of transcription by RNA polymerase II"/>
    <property type="evidence" value="ECO:0000315"/>
    <property type="project" value="BHF-UCL"/>
</dbReference>
<dbReference type="GO" id="GO:0006355">
    <property type="term" value="P:regulation of DNA-templated transcription"/>
    <property type="evidence" value="ECO:0000315"/>
    <property type="project" value="MGI"/>
</dbReference>
<dbReference type="GO" id="GO:0060021">
    <property type="term" value="P:roof of mouth development"/>
    <property type="evidence" value="ECO:0000315"/>
    <property type="project" value="MGI"/>
</dbReference>
<dbReference type="CDD" id="cd00086">
    <property type="entry name" value="homeodomain"/>
    <property type="match status" value="1"/>
</dbReference>
<dbReference type="FunFam" id="1.10.10.60:FF:000048">
    <property type="entry name" value="Distal-less homeobox 2"/>
    <property type="match status" value="1"/>
</dbReference>
<dbReference type="Gene3D" id="1.10.10.60">
    <property type="entry name" value="Homeodomain-like"/>
    <property type="match status" value="1"/>
</dbReference>
<dbReference type="InterPro" id="IPR050460">
    <property type="entry name" value="Distal-less_Homeobox_TF"/>
</dbReference>
<dbReference type="InterPro" id="IPR022135">
    <property type="entry name" value="Distal-less_N"/>
</dbReference>
<dbReference type="InterPro" id="IPR001356">
    <property type="entry name" value="HD"/>
</dbReference>
<dbReference type="InterPro" id="IPR020479">
    <property type="entry name" value="HD_metazoa"/>
</dbReference>
<dbReference type="InterPro" id="IPR017970">
    <property type="entry name" value="Homeobox_CS"/>
</dbReference>
<dbReference type="InterPro" id="IPR009057">
    <property type="entry name" value="Homeodomain-like_sf"/>
</dbReference>
<dbReference type="InterPro" id="IPR000047">
    <property type="entry name" value="HTH_motif"/>
</dbReference>
<dbReference type="PANTHER" id="PTHR24327">
    <property type="entry name" value="HOMEOBOX PROTEIN"/>
    <property type="match status" value="1"/>
</dbReference>
<dbReference type="PANTHER" id="PTHR24327:SF31">
    <property type="entry name" value="HOMEOBOX PROTEIN DLX-5"/>
    <property type="match status" value="1"/>
</dbReference>
<dbReference type="Pfam" id="PF12413">
    <property type="entry name" value="DLL_N"/>
    <property type="match status" value="1"/>
</dbReference>
<dbReference type="Pfam" id="PF00046">
    <property type="entry name" value="Homeodomain"/>
    <property type="match status" value="1"/>
</dbReference>
<dbReference type="PRINTS" id="PR00024">
    <property type="entry name" value="HOMEOBOX"/>
</dbReference>
<dbReference type="PRINTS" id="PR00031">
    <property type="entry name" value="HTHREPRESSR"/>
</dbReference>
<dbReference type="SMART" id="SM00389">
    <property type="entry name" value="HOX"/>
    <property type="match status" value="1"/>
</dbReference>
<dbReference type="SUPFAM" id="SSF46689">
    <property type="entry name" value="Homeodomain-like"/>
    <property type="match status" value="1"/>
</dbReference>
<dbReference type="PROSITE" id="PS00027">
    <property type="entry name" value="HOMEOBOX_1"/>
    <property type="match status" value="1"/>
</dbReference>
<dbReference type="PROSITE" id="PS50071">
    <property type="entry name" value="HOMEOBOX_2"/>
    <property type="match status" value="1"/>
</dbReference>
<proteinExistence type="evidence at protein level"/>
<name>DLX5_MOUSE</name>
<evidence type="ECO:0000250" key="1"/>
<evidence type="ECO:0000255" key="2">
    <source>
        <dbReference type="PROSITE-ProRule" id="PRU00108"/>
    </source>
</evidence>
<evidence type="ECO:0000256" key="3">
    <source>
        <dbReference type="SAM" id="MobiDB-lite"/>
    </source>
</evidence>
<evidence type="ECO:0000269" key="4">
    <source>
    </source>
</evidence>
<evidence type="ECO:0000269" key="5">
    <source>
    </source>
</evidence>
<evidence type="ECO:0000269" key="6">
    <source>
    </source>
</evidence>
<evidence type="ECO:0000269" key="7">
    <source>
    </source>
</evidence>
<evidence type="ECO:0000303" key="8">
    <source>
    </source>
</evidence>
<evidence type="ECO:0000303" key="9">
    <source>
    </source>
</evidence>
<evidence type="ECO:0000305" key="10"/>
<reference key="1">
    <citation type="journal article" date="1996" name="Proc. Natl. Acad. Sci. U.S.A.">
        <title>The evolution of the vertebrate Dlx gene family.</title>
        <authorList>
            <person name="Stock D.W."/>
            <person name="Ellies D.L."/>
            <person name="Zhao Z."/>
            <person name="Ekker M."/>
            <person name="Ruddle F.H."/>
            <person name="Weiss K.M."/>
        </authorList>
    </citation>
    <scope>NUCLEOTIDE SEQUENCE [MRNA] (ISOFORM 1)</scope>
    <source>
        <strain>Swiss Webster</strain>
    </source>
</reference>
<reference key="2">
    <citation type="journal article" date="1999" name="Dev. Biol.">
        <title>A BMP-inducible gene, dlx5, regulates osteoblast differentiation and mesoderm induction.</title>
        <authorList>
            <person name="Miyama K."/>
            <person name="Yamada G."/>
            <person name="Yamamoto T.S."/>
            <person name="Takagi C."/>
            <person name="Miyado K."/>
            <person name="Sakai M."/>
            <person name="Ueno N."/>
            <person name="Shibuya H."/>
        </authorList>
    </citation>
    <scope>NUCLEOTIDE SEQUENCE [MRNA] (ISOFORM 1)</scope>
</reference>
<reference key="3">
    <citation type="journal article" date="1997" name="Dev. Dyn.">
        <title>Dlx genes encode DNA-binding proteins that are expressed in an overlapping and sequential pattern during basal ganglia differentiation.</title>
        <authorList>
            <person name="Liu J.K."/>
            <person name="Ghattas I."/>
            <person name="Liu S."/>
            <person name="Chen S."/>
            <person name="Rubenstein J.L.R."/>
        </authorList>
    </citation>
    <scope>NUCLEOTIDE SEQUENCE [MRNA] (ISOFORMS 1; 2 AND 3)</scope>
</reference>
<reference key="4">
    <citation type="journal article" date="1998" name="J. Neurosci.">
        <title>An early phase of embryonic Dlx5 expression defines the rostral boundary of the neural plate.</title>
        <authorList>
            <person name="Yang L."/>
            <person name="Zhang H."/>
            <person name="Hu G."/>
            <person name="Wang H."/>
            <person name="Abate-Shen C."/>
            <person name="Shen M.M."/>
        </authorList>
    </citation>
    <scope>NUCLEOTIDE SEQUENCE [MRNA] (ISOFORMS 1 AND 3)</scope>
    <source>
        <tissue>Embryonic head</tissue>
    </source>
</reference>
<reference key="5">
    <citation type="journal article" date="2004" name="J. Biol. Chem.">
        <title>Bone morphogenetic protein-2-induced alkaline phosphatase expression is stimulated by Dlx5 and repressed by Msx2.</title>
        <authorList>
            <person name="Kim Y.J."/>
            <person name="Lee M.H."/>
            <person name="Wozney J.M."/>
            <person name="Cho J.Y."/>
            <person name="Ryoo H.M."/>
        </authorList>
    </citation>
    <scope>FUNCTION</scope>
    <scope>DNA-BINDING</scope>
    <scope>INDUCTION</scope>
</reference>
<reference key="6">
    <citation type="journal article" date="2008" name="J. Biol. Chem.">
        <title>BMP-2 induces Osterix expression through up-regulation of Dlx5 and its phosphorylation by p38.</title>
        <authorList>
            <person name="Ulsamer A."/>
            <person name="Ortuno M.J."/>
            <person name="Ruiz S."/>
            <person name="Susperregui A.R."/>
            <person name="Osses N."/>
            <person name="Rosa J.L."/>
            <person name="Ventura F."/>
        </authorList>
    </citation>
    <scope>FUNCTION</scope>
    <scope>PHOSPHORYLATION AT SER-34 AND SER-217</scope>
    <scope>MUTAGENESIS OF SER-34 AND SER-217</scope>
    <scope>SUBCELLULAR LOCATION</scope>
    <scope>INDUCTION</scope>
</reference>
<reference key="7">
    <citation type="journal article" date="2009" name="Biochem. Biophys. Res. Commun.">
        <title>Calmodulin-dependent kinase II regulates Dlx5 during osteoblast differentiation.</title>
        <authorList>
            <person name="Seo J.H."/>
            <person name="Jin Y.H."/>
            <person name="Jeong H.M."/>
            <person name="Kim Y.J."/>
            <person name="Jeong H.G."/>
            <person name="Yeo C.Y."/>
            <person name="Lee K.Y."/>
        </authorList>
    </citation>
    <scope>PHOSPHORYLATION</scope>
</reference>
<reference key="8">
    <citation type="journal article" date="2009" name="PLoS ONE">
        <title>Dlx5 Is a cell autonomous regulator of chondrocyte hypertrophy in mice and functionally substitutes for Dlx6 during endochondral ossification.</title>
        <authorList>
            <person name="Zhu H."/>
            <person name="Bendall A.J."/>
        </authorList>
    </citation>
    <scope>FUNCTION</scope>
    <scope>TISSUE SPECIFICITY</scope>
    <scope>DEVELOPMENTAL STAGE</scope>
</reference>
<sequence>MTGVFDRRVPSIRSGDFQAPFPTSAAMHHPSQESPTLPESSATDSDYYSPAGAAPHGYCSPTSASYGKALNPYQYQYHGVNGSAAGYPAKAYADYGYASPYHQYGGAYNRVPSATSQPEKEVAEPEVRMVNGKPKKVRKPRTIYSSFQLAALQRRFQKTQYLALPERAELAASLGLTQTQVKIWFQNKRSKIKKIMKNGEMPPEHSPSSSDPMACNSPQSPAVWEPQGSSRSLSHHPHAHPPTSNQSPASSYLENSASWYPSAASSINSHLPPPGSLQHPLALASGTLY</sequence>
<gene>
    <name type="primary">Dlx5</name>
</gene>
<keyword id="KW-0010">Activator</keyword>
<keyword id="KW-0025">Alternative splicing</keyword>
<keyword id="KW-0217">Developmental protein</keyword>
<keyword id="KW-0238">DNA-binding</keyword>
<keyword id="KW-0371">Homeobox</keyword>
<keyword id="KW-0539">Nucleus</keyword>
<keyword id="KW-0892">Osteogenesis</keyword>
<keyword id="KW-0597">Phosphoprotein</keyword>
<keyword id="KW-1185">Reference proteome</keyword>
<keyword id="KW-0804">Transcription</keyword>
<keyword id="KW-0805">Transcription regulation</keyword>